<protein>
    <recommendedName>
        <fullName evidence="1">Protoheme IX farnesyltransferase</fullName>
        <ecNumber evidence="1">2.5.1.141</ecNumber>
    </recommendedName>
    <alternativeName>
        <fullName evidence="1">Heme B farnesyltransferase</fullName>
    </alternativeName>
    <alternativeName>
        <fullName evidence="1">Heme O synthase</fullName>
    </alternativeName>
</protein>
<organism>
    <name type="scientific">Rhodococcus jostii (strain RHA1)</name>
    <dbReference type="NCBI Taxonomy" id="101510"/>
    <lineage>
        <taxon>Bacteria</taxon>
        <taxon>Bacillati</taxon>
        <taxon>Actinomycetota</taxon>
        <taxon>Actinomycetes</taxon>
        <taxon>Mycobacteriales</taxon>
        <taxon>Nocardiaceae</taxon>
        <taxon>Rhodococcus</taxon>
    </lineage>
</organism>
<feature type="chain" id="PRO_0000327137" description="Protoheme IX farnesyltransferase">
    <location>
        <begin position="1"/>
        <end position="301"/>
    </location>
</feature>
<feature type="transmembrane region" description="Helical" evidence="1">
    <location>
        <begin position="9"/>
        <end position="29"/>
    </location>
</feature>
<feature type="transmembrane region" description="Helical" evidence="1">
    <location>
        <begin position="42"/>
        <end position="62"/>
    </location>
</feature>
<feature type="transmembrane region" description="Helical" evidence="1">
    <location>
        <begin position="89"/>
        <end position="109"/>
    </location>
</feature>
<feature type="transmembrane region" description="Helical" evidence="1">
    <location>
        <begin position="113"/>
        <end position="133"/>
    </location>
</feature>
<feature type="transmembrane region" description="Helical" evidence="1">
    <location>
        <begin position="142"/>
        <end position="162"/>
    </location>
</feature>
<feature type="transmembrane region" description="Helical" evidence="1">
    <location>
        <begin position="168"/>
        <end position="188"/>
    </location>
</feature>
<feature type="transmembrane region" description="Helical" evidence="1">
    <location>
        <begin position="211"/>
        <end position="231"/>
    </location>
</feature>
<feature type="transmembrane region" description="Helical" evidence="1">
    <location>
        <begin position="232"/>
        <end position="252"/>
    </location>
</feature>
<feature type="transmembrane region" description="Helical" evidence="1">
    <location>
        <begin position="280"/>
        <end position="300"/>
    </location>
</feature>
<evidence type="ECO:0000255" key="1">
    <source>
        <dbReference type="HAMAP-Rule" id="MF_00154"/>
    </source>
</evidence>
<evidence type="ECO:0000305" key="2"/>
<keyword id="KW-1003">Cell membrane</keyword>
<keyword id="KW-0350">Heme biosynthesis</keyword>
<keyword id="KW-0472">Membrane</keyword>
<keyword id="KW-0808">Transferase</keyword>
<keyword id="KW-0812">Transmembrane</keyword>
<keyword id="KW-1133">Transmembrane helix</keyword>
<proteinExistence type="inferred from homology"/>
<comment type="function">
    <text evidence="1">Converts heme B (protoheme IX) to heme O by substitution of the vinyl group on carbon 2 of heme B porphyrin ring with a hydroxyethyl farnesyl side group.</text>
</comment>
<comment type="catalytic activity">
    <reaction evidence="1">
        <text>heme b + (2E,6E)-farnesyl diphosphate + H2O = Fe(II)-heme o + diphosphate</text>
        <dbReference type="Rhea" id="RHEA:28070"/>
        <dbReference type="ChEBI" id="CHEBI:15377"/>
        <dbReference type="ChEBI" id="CHEBI:33019"/>
        <dbReference type="ChEBI" id="CHEBI:60344"/>
        <dbReference type="ChEBI" id="CHEBI:60530"/>
        <dbReference type="ChEBI" id="CHEBI:175763"/>
        <dbReference type="EC" id="2.5.1.141"/>
    </reaction>
</comment>
<comment type="pathway">
    <text evidence="1">Porphyrin-containing compound metabolism; heme O biosynthesis; heme O from protoheme: step 1/1.</text>
</comment>
<comment type="subcellular location">
    <subcellularLocation>
        <location evidence="1">Cell membrane</location>
        <topology evidence="1">Multi-pass membrane protein</topology>
    </subcellularLocation>
</comment>
<comment type="miscellaneous">
    <text evidence="1">Carbon 2 of the heme B porphyrin ring is defined according to the Fischer nomenclature.</text>
</comment>
<comment type="similarity">
    <text evidence="1">Belongs to the UbiA prenyltransferase family. Protoheme IX farnesyltransferase subfamily.</text>
</comment>
<comment type="sequence caution" evidence="2">
    <conflict type="erroneous initiation">
        <sequence resource="EMBL-CDS" id="ABG98951"/>
    </conflict>
</comment>
<name>COXX_RHOJR</name>
<accession>Q0S0I5</accession>
<reference key="1">
    <citation type="journal article" date="2006" name="Proc. Natl. Acad. Sci. U.S.A.">
        <title>The complete genome of Rhodococcus sp. RHA1 provides insights into a catabolic powerhouse.</title>
        <authorList>
            <person name="McLeod M.P."/>
            <person name="Warren R.L."/>
            <person name="Hsiao W.W.L."/>
            <person name="Araki N."/>
            <person name="Myhre M."/>
            <person name="Fernandes C."/>
            <person name="Miyazawa D."/>
            <person name="Wong W."/>
            <person name="Lillquist A.L."/>
            <person name="Wang D."/>
            <person name="Dosanjh M."/>
            <person name="Hara H."/>
            <person name="Petrescu A."/>
            <person name="Morin R.D."/>
            <person name="Yang G."/>
            <person name="Stott J.M."/>
            <person name="Schein J.E."/>
            <person name="Shin H."/>
            <person name="Smailus D."/>
            <person name="Siddiqui A.S."/>
            <person name="Marra M.A."/>
            <person name="Jones S.J.M."/>
            <person name="Holt R."/>
            <person name="Brinkman F.S.L."/>
            <person name="Miyauchi K."/>
            <person name="Fukuda M."/>
            <person name="Davies J.E."/>
            <person name="Mohn W.W."/>
            <person name="Eltis L.D."/>
        </authorList>
    </citation>
    <scope>NUCLEOTIDE SEQUENCE [LARGE SCALE GENOMIC DNA]</scope>
    <source>
        <strain>RHA1</strain>
    </source>
</reference>
<gene>
    <name evidence="1" type="primary">ctaB</name>
    <name type="ordered locus">RHA1_ro07187</name>
</gene>
<dbReference type="EC" id="2.5.1.141" evidence="1"/>
<dbReference type="EMBL" id="CP000431">
    <property type="protein sequence ID" value="ABG98951.1"/>
    <property type="status" value="ALT_INIT"/>
    <property type="molecule type" value="Genomic_DNA"/>
</dbReference>
<dbReference type="RefSeq" id="WP_009480452.1">
    <property type="nucleotide sequence ID" value="NC_008268.1"/>
</dbReference>
<dbReference type="SMR" id="Q0S0I5"/>
<dbReference type="KEGG" id="rha:RHA1_ro07187"/>
<dbReference type="eggNOG" id="COG0109">
    <property type="taxonomic scope" value="Bacteria"/>
</dbReference>
<dbReference type="HOGENOM" id="CLU_029631_0_1_11"/>
<dbReference type="OrthoDB" id="9814417at2"/>
<dbReference type="UniPathway" id="UPA00834">
    <property type="reaction ID" value="UER00712"/>
</dbReference>
<dbReference type="Proteomes" id="UP000008710">
    <property type="component" value="Chromosome"/>
</dbReference>
<dbReference type="GO" id="GO:0005886">
    <property type="term" value="C:plasma membrane"/>
    <property type="evidence" value="ECO:0007669"/>
    <property type="project" value="UniProtKB-SubCell"/>
</dbReference>
<dbReference type="GO" id="GO:0008495">
    <property type="term" value="F:protoheme IX farnesyltransferase activity"/>
    <property type="evidence" value="ECO:0007669"/>
    <property type="project" value="UniProtKB-UniRule"/>
</dbReference>
<dbReference type="GO" id="GO:0048034">
    <property type="term" value="P:heme O biosynthetic process"/>
    <property type="evidence" value="ECO:0007669"/>
    <property type="project" value="UniProtKB-UniRule"/>
</dbReference>
<dbReference type="CDD" id="cd13957">
    <property type="entry name" value="PT_UbiA_Cox10"/>
    <property type="match status" value="1"/>
</dbReference>
<dbReference type="FunFam" id="1.10.357.140:FF:000001">
    <property type="entry name" value="Protoheme IX farnesyltransferase"/>
    <property type="match status" value="1"/>
</dbReference>
<dbReference type="Gene3D" id="1.10.357.140">
    <property type="entry name" value="UbiA prenyltransferase"/>
    <property type="match status" value="1"/>
</dbReference>
<dbReference type="HAMAP" id="MF_00154">
    <property type="entry name" value="CyoE_CtaB"/>
    <property type="match status" value="1"/>
</dbReference>
<dbReference type="InterPro" id="IPR006369">
    <property type="entry name" value="Protohaem_IX_farnesylTrfase"/>
</dbReference>
<dbReference type="InterPro" id="IPR000537">
    <property type="entry name" value="UbiA_prenyltransferase"/>
</dbReference>
<dbReference type="InterPro" id="IPR044878">
    <property type="entry name" value="UbiA_sf"/>
</dbReference>
<dbReference type="NCBIfam" id="TIGR01473">
    <property type="entry name" value="cyoE_ctaB"/>
    <property type="match status" value="1"/>
</dbReference>
<dbReference type="NCBIfam" id="NF003349">
    <property type="entry name" value="PRK04375.1-2"/>
    <property type="match status" value="1"/>
</dbReference>
<dbReference type="PANTHER" id="PTHR43448:SF7">
    <property type="entry name" value="4-HYDROXYBENZOATE SOLANESYLTRANSFERASE"/>
    <property type="match status" value="1"/>
</dbReference>
<dbReference type="PANTHER" id="PTHR43448">
    <property type="entry name" value="PROTOHEME IX FARNESYLTRANSFERASE, MITOCHONDRIAL"/>
    <property type="match status" value="1"/>
</dbReference>
<dbReference type="Pfam" id="PF01040">
    <property type="entry name" value="UbiA"/>
    <property type="match status" value="1"/>
</dbReference>
<sequence>MLGRVTGKVLAYIALTKPRVIELLLVATIPAMLLADRGNVDIALILSTLFGGWMGAASANSLNCVVDADIDKVMKRTARRPLARDAVPTSHAFVFGMTLGVASFLWLWWRANLLAGCLVVLTIAFYVLVYTMVLKRRTWQNVVWGGAAGCMPVMVGWSAVTGSLSWQPIVLFLVIFFWTPPHTWALAMRYKEDYKAAGVPMLPVIATEEHVTKQILLYSWAMVITSLTLVPAAGVVYAAVTLVAGAWFLLMAHQLYRSVRGGAAVKPLRLFLQSNNYLAVVFVGLAVDSVLGLQTVGSLLS</sequence>